<sequence length="161" mass="18341">MTVLEIDLLDETNNLPDEDKQLVENILQFAAGYLKIEEGTELSLTFTTNEGIQEINREYRNKDQATDVISFALEEMGDGETEIDWGDFDLETPRMLGDIIISTEKAEEQAKDYGHTKARELGFLAVHGLLHLLGYDHMEPDEEKVMFGLQKEVLDAYGLER</sequence>
<proteinExistence type="inferred from homology"/>
<protein>
    <recommendedName>
        <fullName evidence="1">Endoribonuclease YbeY</fullName>
        <ecNumber evidence="1">3.1.-.-</ecNumber>
    </recommendedName>
</protein>
<name>YBEY_LISIN</name>
<reference key="1">
    <citation type="journal article" date="2001" name="Science">
        <title>Comparative genomics of Listeria species.</title>
        <authorList>
            <person name="Glaser P."/>
            <person name="Frangeul L."/>
            <person name="Buchrieser C."/>
            <person name="Rusniok C."/>
            <person name="Amend A."/>
            <person name="Baquero F."/>
            <person name="Berche P."/>
            <person name="Bloecker H."/>
            <person name="Brandt P."/>
            <person name="Chakraborty T."/>
            <person name="Charbit A."/>
            <person name="Chetouani F."/>
            <person name="Couve E."/>
            <person name="de Daruvar A."/>
            <person name="Dehoux P."/>
            <person name="Domann E."/>
            <person name="Dominguez-Bernal G."/>
            <person name="Duchaud E."/>
            <person name="Durant L."/>
            <person name="Dussurget O."/>
            <person name="Entian K.-D."/>
            <person name="Fsihi H."/>
            <person name="Garcia-del Portillo F."/>
            <person name="Garrido P."/>
            <person name="Gautier L."/>
            <person name="Goebel W."/>
            <person name="Gomez-Lopez N."/>
            <person name="Hain T."/>
            <person name="Hauf J."/>
            <person name="Jackson D."/>
            <person name="Jones L.-M."/>
            <person name="Kaerst U."/>
            <person name="Kreft J."/>
            <person name="Kuhn M."/>
            <person name="Kunst F."/>
            <person name="Kurapkat G."/>
            <person name="Madueno E."/>
            <person name="Maitournam A."/>
            <person name="Mata Vicente J."/>
            <person name="Ng E."/>
            <person name="Nedjari H."/>
            <person name="Nordsiek G."/>
            <person name="Novella S."/>
            <person name="de Pablos B."/>
            <person name="Perez-Diaz J.-C."/>
            <person name="Purcell R."/>
            <person name="Remmel B."/>
            <person name="Rose M."/>
            <person name="Schlueter T."/>
            <person name="Simoes N."/>
            <person name="Tierrez A."/>
            <person name="Vazquez-Boland J.-A."/>
            <person name="Voss H."/>
            <person name="Wehland J."/>
            <person name="Cossart P."/>
        </authorList>
    </citation>
    <scope>NUCLEOTIDE SEQUENCE [LARGE SCALE GENOMIC DNA]</scope>
    <source>
        <strain>ATCC BAA-680 / CLIP 11262</strain>
    </source>
</reference>
<keyword id="KW-0963">Cytoplasm</keyword>
<keyword id="KW-0255">Endonuclease</keyword>
<keyword id="KW-0378">Hydrolase</keyword>
<keyword id="KW-0479">Metal-binding</keyword>
<keyword id="KW-0540">Nuclease</keyword>
<keyword id="KW-0690">Ribosome biogenesis</keyword>
<keyword id="KW-0698">rRNA processing</keyword>
<keyword id="KW-0862">Zinc</keyword>
<evidence type="ECO:0000255" key="1">
    <source>
        <dbReference type="HAMAP-Rule" id="MF_00009"/>
    </source>
</evidence>
<accession>Q92BP5</accession>
<gene>
    <name evidence="1" type="primary">ybeY</name>
    <name type="ordered locus">lin1502</name>
</gene>
<dbReference type="EC" id="3.1.-.-" evidence="1"/>
<dbReference type="EMBL" id="AL596168">
    <property type="protein sequence ID" value="CAC96733.1"/>
    <property type="molecule type" value="Genomic_DNA"/>
</dbReference>
<dbReference type="PIR" id="AE1620">
    <property type="entry name" value="AE1620"/>
</dbReference>
<dbReference type="RefSeq" id="WP_003762298.1">
    <property type="nucleotide sequence ID" value="NC_003212.1"/>
</dbReference>
<dbReference type="SMR" id="Q92BP5"/>
<dbReference type="STRING" id="272626.gene:17565833"/>
<dbReference type="GeneID" id="93234883"/>
<dbReference type="KEGG" id="lin:lin1502"/>
<dbReference type="eggNOG" id="COG0319">
    <property type="taxonomic scope" value="Bacteria"/>
</dbReference>
<dbReference type="HOGENOM" id="CLU_106710_3_0_9"/>
<dbReference type="OrthoDB" id="9807740at2"/>
<dbReference type="Proteomes" id="UP000002513">
    <property type="component" value="Chromosome"/>
</dbReference>
<dbReference type="GO" id="GO:0005737">
    <property type="term" value="C:cytoplasm"/>
    <property type="evidence" value="ECO:0007669"/>
    <property type="project" value="UniProtKB-SubCell"/>
</dbReference>
<dbReference type="GO" id="GO:0004222">
    <property type="term" value="F:metalloendopeptidase activity"/>
    <property type="evidence" value="ECO:0007669"/>
    <property type="project" value="InterPro"/>
</dbReference>
<dbReference type="GO" id="GO:0004521">
    <property type="term" value="F:RNA endonuclease activity"/>
    <property type="evidence" value="ECO:0007669"/>
    <property type="project" value="UniProtKB-UniRule"/>
</dbReference>
<dbReference type="GO" id="GO:0008270">
    <property type="term" value="F:zinc ion binding"/>
    <property type="evidence" value="ECO:0007669"/>
    <property type="project" value="UniProtKB-UniRule"/>
</dbReference>
<dbReference type="GO" id="GO:0006364">
    <property type="term" value="P:rRNA processing"/>
    <property type="evidence" value="ECO:0007669"/>
    <property type="project" value="UniProtKB-UniRule"/>
</dbReference>
<dbReference type="Gene3D" id="3.40.390.30">
    <property type="entry name" value="Metalloproteases ('zincins'), catalytic domain"/>
    <property type="match status" value="1"/>
</dbReference>
<dbReference type="HAMAP" id="MF_00009">
    <property type="entry name" value="Endoribonucl_YbeY"/>
    <property type="match status" value="1"/>
</dbReference>
<dbReference type="InterPro" id="IPR023091">
    <property type="entry name" value="MetalPrtase_cat_dom_sf_prd"/>
</dbReference>
<dbReference type="InterPro" id="IPR002036">
    <property type="entry name" value="YbeY"/>
</dbReference>
<dbReference type="InterPro" id="IPR020549">
    <property type="entry name" value="YbeY_CS"/>
</dbReference>
<dbReference type="NCBIfam" id="TIGR00043">
    <property type="entry name" value="rRNA maturation RNase YbeY"/>
    <property type="match status" value="1"/>
</dbReference>
<dbReference type="PANTHER" id="PTHR46986">
    <property type="entry name" value="ENDORIBONUCLEASE YBEY, CHLOROPLASTIC"/>
    <property type="match status" value="1"/>
</dbReference>
<dbReference type="PANTHER" id="PTHR46986:SF1">
    <property type="entry name" value="ENDORIBONUCLEASE YBEY, CHLOROPLASTIC"/>
    <property type="match status" value="1"/>
</dbReference>
<dbReference type="Pfam" id="PF02130">
    <property type="entry name" value="YbeY"/>
    <property type="match status" value="1"/>
</dbReference>
<dbReference type="SUPFAM" id="SSF55486">
    <property type="entry name" value="Metalloproteases ('zincins'), catalytic domain"/>
    <property type="match status" value="1"/>
</dbReference>
<dbReference type="PROSITE" id="PS01306">
    <property type="entry name" value="UPF0054"/>
    <property type="match status" value="1"/>
</dbReference>
<comment type="function">
    <text evidence="1">Single strand-specific metallo-endoribonuclease involved in late-stage 70S ribosome quality control and in maturation of the 3' terminus of the 16S rRNA.</text>
</comment>
<comment type="cofactor">
    <cofactor evidence="1">
        <name>Zn(2+)</name>
        <dbReference type="ChEBI" id="CHEBI:29105"/>
    </cofactor>
    <text evidence="1">Binds 1 zinc ion.</text>
</comment>
<comment type="subcellular location">
    <subcellularLocation>
        <location evidence="1">Cytoplasm</location>
    </subcellularLocation>
</comment>
<comment type="similarity">
    <text evidence="1">Belongs to the endoribonuclease YbeY family.</text>
</comment>
<organism>
    <name type="scientific">Listeria innocua serovar 6a (strain ATCC BAA-680 / CLIP 11262)</name>
    <dbReference type="NCBI Taxonomy" id="272626"/>
    <lineage>
        <taxon>Bacteria</taxon>
        <taxon>Bacillati</taxon>
        <taxon>Bacillota</taxon>
        <taxon>Bacilli</taxon>
        <taxon>Bacillales</taxon>
        <taxon>Listeriaceae</taxon>
        <taxon>Listeria</taxon>
    </lineage>
</organism>
<feature type="chain" id="PRO_0000102479" description="Endoribonuclease YbeY">
    <location>
        <begin position="1"/>
        <end position="161"/>
    </location>
</feature>
<feature type="binding site" evidence="1">
    <location>
        <position position="127"/>
    </location>
    <ligand>
        <name>Zn(2+)</name>
        <dbReference type="ChEBI" id="CHEBI:29105"/>
        <note>catalytic</note>
    </ligand>
</feature>
<feature type="binding site" evidence="1">
    <location>
        <position position="131"/>
    </location>
    <ligand>
        <name>Zn(2+)</name>
        <dbReference type="ChEBI" id="CHEBI:29105"/>
        <note>catalytic</note>
    </ligand>
</feature>
<feature type="binding site" evidence="1">
    <location>
        <position position="137"/>
    </location>
    <ligand>
        <name>Zn(2+)</name>
        <dbReference type="ChEBI" id="CHEBI:29105"/>
        <note>catalytic</note>
    </ligand>
</feature>